<sequence length="60" mass="6711">MATKTVKVTQTKSAIGRLPKHRATLTGLGLRRIGHTVELEDTPSIRGMINKVYYMVKVED</sequence>
<organism>
    <name type="scientific">Shewanella sp. (strain MR-7)</name>
    <dbReference type="NCBI Taxonomy" id="60481"/>
    <lineage>
        <taxon>Bacteria</taxon>
        <taxon>Pseudomonadati</taxon>
        <taxon>Pseudomonadota</taxon>
        <taxon>Gammaproteobacteria</taxon>
        <taxon>Alteromonadales</taxon>
        <taxon>Shewanellaceae</taxon>
        <taxon>Shewanella</taxon>
    </lineage>
</organism>
<evidence type="ECO:0000255" key="1">
    <source>
        <dbReference type="HAMAP-Rule" id="MF_01371"/>
    </source>
</evidence>
<evidence type="ECO:0000305" key="2"/>
<gene>
    <name evidence="1" type="primary">rpmD</name>
    <name type="ordered locus">Shewmr7_0212</name>
</gene>
<name>RL30_SHESR</name>
<feature type="chain" id="PRO_0000273853" description="Large ribosomal subunit protein uL30">
    <location>
        <begin position="1"/>
        <end position="60"/>
    </location>
</feature>
<reference key="1">
    <citation type="submission" date="2006-08" db="EMBL/GenBank/DDBJ databases">
        <title>Complete sequence of chromosome 1 of Shewanella sp. MR-7.</title>
        <authorList>
            <person name="Copeland A."/>
            <person name="Lucas S."/>
            <person name="Lapidus A."/>
            <person name="Barry K."/>
            <person name="Detter J.C."/>
            <person name="Glavina del Rio T."/>
            <person name="Hammon N."/>
            <person name="Israni S."/>
            <person name="Dalin E."/>
            <person name="Tice H."/>
            <person name="Pitluck S."/>
            <person name="Kiss H."/>
            <person name="Brettin T."/>
            <person name="Bruce D."/>
            <person name="Han C."/>
            <person name="Tapia R."/>
            <person name="Gilna P."/>
            <person name="Schmutz J."/>
            <person name="Larimer F."/>
            <person name="Land M."/>
            <person name="Hauser L."/>
            <person name="Kyrpides N."/>
            <person name="Mikhailova N."/>
            <person name="Nealson K."/>
            <person name="Konstantinidis K."/>
            <person name="Klappenbach J."/>
            <person name="Tiedje J."/>
            <person name="Richardson P."/>
        </authorList>
    </citation>
    <scope>NUCLEOTIDE SEQUENCE [LARGE SCALE GENOMIC DNA]</scope>
    <source>
        <strain>MR-7</strain>
    </source>
</reference>
<accession>Q0I087</accession>
<keyword id="KW-0687">Ribonucleoprotein</keyword>
<keyword id="KW-0689">Ribosomal protein</keyword>
<proteinExistence type="inferred from homology"/>
<protein>
    <recommendedName>
        <fullName evidence="1">Large ribosomal subunit protein uL30</fullName>
    </recommendedName>
    <alternativeName>
        <fullName evidence="2">50S ribosomal protein L30</fullName>
    </alternativeName>
</protein>
<comment type="subunit">
    <text evidence="1">Part of the 50S ribosomal subunit.</text>
</comment>
<comment type="similarity">
    <text evidence="1">Belongs to the universal ribosomal protein uL30 family.</text>
</comment>
<dbReference type="EMBL" id="CP000444">
    <property type="protein sequence ID" value="ABI41218.1"/>
    <property type="molecule type" value="Genomic_DNA"/>
</dbReference>
<dbReference type="SMR" id="Q0I087"/>
<dbReference type="KEGG" id="shm:Shewmr7_0212"/>
<dbReference type="HOGENOM" id="CLU_131047_1_4_6"/>
<dbReference type="GO" id="GO:0022625">
    <property type="term" value="C:cytosolic large ribosomal subunit"/>
    <property type="evidence" value="ECO:0007669"/>
    <property type="project" value="TreeGrafter"/>
</dbReference>
<dbReference type="GO" id="GO:0003735">
    <property type="term" value="F:structural constituent of ribosome"/>
    <property type="evidence" value="ECO:0007669"/>
    <property type="project" value="InterPro"/>
</dbReference>
<dbReference type="GO" id="GO:0006412">
    <property type="term" value="P:translation"/>
    <property type="evidence" value="ECO:0007669"/>
    <property type="project" value="UniProtKB-UniRule"/>
</dbReference>
<dbReference type="CDD" id="cd01658">
    <property type="entry name" value="Ribosomal_L30"/>
    <property type="match status" value="1"/>
</dbReference>
<dbReference type="FunFam" id="3.30.1390.20:FF:000001">
    <property type="entry name" value="50S ribosomal protein L30"/>
    <property type="match status" value="1"/>
</dbReference>
<dbReference type="Gene3D" id="3.30.1390.20">
    <property type="entry name" value="Ribosomal protein L30, ferredoxin-like fold domain"/>
    <property type="match status" value="1"/>
</dbReference>
<dbReference type="HAMAP" id="MF_01371_B">
    <property type="entry name" value="Ribosomal_uL30_B"/>
    <property type="match status" value="1"/>
</dbReference>
<dbReference type="InterPro" id="IPR036919">
    <property type="entry name" value="Ribo_uL30_ferredoxin-like_sf"/>
</dbReference>
<dbReference type="InterPro" id="IPR005996">
    <property type="entry name" value="Ribosomal_uL30_bac-type"/>
</dbReference>
<dbReference type="InterPro" id="IPR018038">
    <property type="entry name" value="Ribosomal_uL30_CS"/>
</dbReference>
<dbReference type="InterPro" id="IPR016082">
    <property type="entry name" value="Ribosomal_uL30_ferredoxin-like"/>
</dbReference>
<dbReference type="NCBIfam" id="TIGR01308">
    <property type="entry name" value="rpmD_bact"/>
    <property type="match status" value="1"/>
</dbReference>
<dbReference type="PANTHER" id="PTHR15892:SF2">
    <property type="entry name" value="LARGE RIBOSOMAL SUBUNIT PROTEIN UL30M"/>
    <property type="match status" value="1"/>
</dbReference>
<dbReference type="PANTHER" id="PTHR15892">
    <property type="entry name" value="MITOCHONDRIAL RIBOSOMAL PROTEIN L30"/>
    <property type="match status" value="1"/>
</dbReference>
<dbReference type="Pfam" id="PF00327">
    <property type="entry name" value="Ribosomal_L30"/>
    <property type="match status" value="1"/>
</dbReference>
<dbReference type="PIRSF" id="PIRSF002211">
    <property type="entry name" value="Ribosomal_L30_bac-type"/>
    <property type="match status" value="1"/>
</dbReference>
<dbReference type="SUPFAM" id="SSF55129">
    <property type="entry name" value="Ribosomal protein L30p/L7e"/>
    <property type="match status" value="1"/>
</dbReference>
<dbReference type="PROSITE" id="PS00634">
    <property type="entry name" value="RIBOSOMAL_L30"/>
    <property type="match status" value="1"/>
</dbReference>